<gene>
    <name type="primary">TRM44</name>
    <name type="ordered locus">DEHA2D13002g</name>
</gene>
<keyword id="KW-0963">Cytoplasm</keyword>
<keyword id="KW-0489">Methyltransferase</keyword>
<keyword id="KW-1185">Reference proteome</keyword>
<keyword id="KW-0949">S-adenosyl-L-methionine</keyword>
<keyword id="KW-0808">Transferase</keyword>
<keyword id="KW-0819">tRNA processing</keyword>
<reference key="1">
    <citation type="journal article" date="2004" name="Nature">
        <title>Genome evolution in yeasts.</title>
        <authorList>
            <person name="Dujon B."/>
            <person name="Sherman D."/>
            <person name="Fischer G."/>
            <person name="Durrens P."/>
            <person name="Casaregola S."/>
            <person name="Lafontaine I."/>
            <person name="de Montigny J."/>
            <person name="Marck C."/>
            <person name="Neuveglise C."/>
            <person name="Talla E."/>
            <person name="Goffard N."/>
            <person name="Frangeul L."/>
            <person name="Aigle M."/>
            <person name="Anthouard V."/>
            <person name="Babour A."/>
            <person name="Barbe V."/>
            <person name="Barnay S."/>
            <person name="Blanchin S."/>
            <person name="Beckerich J.-M."/>
            <person name="Beyne E."/>
            <person name="Bleykasten C."/>
            <person name="Boisrame A."/>
            <person name="Boyer J."/>
            <person name="Cattolico L."/>
            <person name="Confanioleri F."/>
            <person name="de Daruvar A."/>
            <person name="Despons L."/>
            <person name="Fabre E."/>
            <person name="Fairhead C."/>
            <person name="Ferry-Dumazet H."/>
            <person name="Groppi A."/>
            <person name="Hantraye F."/>
            <person name="Hennequin C."/>
            <person name="Jauniaux N."/>
            <person name="Joyet P."/>
            <person name="Kachouri R."/>
            <person name="Kerrest A."/>
            <person name="Koszul R."/>
            <person name="Lemaire M."/>
            <person name="Lesur I."/>
            <person name="Ma L."/>
            <person name="Muller H."/>
            <person name="Nicaud J.-M."/>
            <person name="Nikolski M."/>
            <person name="Oztas S."/>
            <person name="Ozier-Kalogeropoulos O."/>
            <person name="Pellenz S."/>
            <person name="Potier S."/>
            <person name="Richard G.-F."/>
            <person name="Straub M.-L."/>
            <person name="Suleau A."/>
            <person name="Swennen D."/>
            <person name="Tekaia F."/>
            <person name="Wesolowski-Louvel M."/>
            <person name="Westhof E."/>
            <person name="Wirth B."/>
            <person name="Zeniou-Meyer M."/>
            <person name="Zivanovic Y."/>
            <person name="Bolotin-Fukuhara M."/>
            <person name="Thierry A."/>
            <person name="Bouchier C."/>
            <person name="Caudron B."/>
            <person name="Scarpelli C."/>
            <person name="Gaillardin C."/>
            <person name="Weissenbach J."/>
            <person name="Wincker P."/>
            <person name="Souciet J.-L."/>
        </authorList>
    </citation>
    <scope>NUCLEOTIDE SEQUENCE [LARGE SCALE GENOMIC DNA]</scope>
    <source>
        <strain>ATCC 36239 / CBS 767 / BCRC 21394 / JCM 1990 / NBRC 0083 / IGC 2968</strain>
    </source>
</reference>
<dbReference type="EC" id="2.1.1.211"/>
<dbReference type="EMBL" id="CR382136">
    <property type="protein sequence ID" value="CAG87207.2"/>
    <property type="molecule type" value="Genomic_DNA"/>
</dbReference>
<dbReference type="RefSeq" id="XP_459039.2">
    <property type="nucleotide sequence ID" value="XM_459039.1"/>
</dbReference>
<dbReference type="FunCoup" id="Q6BRY1">
    <property type="interactions" value="102"/>
</dbReference>
<dbReference type="STRING" id="284592.Q6BRY1"/>
<dbReference type="GeneID" id="2901524"/>
<dbReference type="KEGG" id="dha:DEHA2D13002g"/>
<dbReference type="VEuPathDB" id="FungiDB:DEHA2D13002g"/>
<dbReference type="eggNOG" id="KOG3790">
    <property type="taxonomic scope" value="Eukaryota"/>
</dbReference>
<dbReference type="HOGENOM" id="CLU_018580_2_0_1"/>
<dbReference type="InParanoid" id="Q6BRY1"/>
<dbReference type="OMA" id="IREPNIN"/>
<dbReference type="OrthoDB" id="10047021at2759"/>
<dbReference type="Proteomes" id="UP000000599">
    <property type="component" value="Chromosome D"/>
</dbReference>
<dbReference type="GO" id="GO:0005737">
    <property type="term" value="C:cytoplasm"/>
    <property type="evidence" value="ECO:0007669"/>
    <property type="project" value="UniProtKB-SubCell"/>
</dbReference>
<dbReference type="GO" id="GO:0141101">
    <property type="term" value="F:tRNA(Ser) (uridine(44)-2'-O-)-methyltransferase activity"/>
    <property type="evidence" value="ECO:0007669"/>
    <property type="project" value="UniProtKB-EC"/>
</dbReference>
<dbReference type="GO" id="GO:0002128">
    <property type="term" value="P:tRNA nucleoside ribose methylation"/>
    <property type="evidence" value="ECO:0007669"/>
    <property type="project" value="EnsemblFungi"/>
</dbReference>
<dbReference type="InterPro" id="IPR011671">
    <property type="entry name" value="tRNA_uracil_MeTrfase"/>
</dbReference>
<dbReference type="PANTHER" id="PTHR21210">
    <property type="entry name" value="TRNA (URACIL-O(2)-)-METHYLTRANSFERASE-RELATED"/>
    <property type="match status" value="1"/>
</dbReference>
<dbReference type="PANTHER" id="PTHR21210:SF0">
    <property type="entry name" value="TRNA (URACIL-O(2)-)-METHYLTRANSFERASE-RELATED"/>
    <property type="match status" value="1"/>
</dbReference>
<dbReference type="Pfam" id="PF07757">
    <property type="entry name" value="AdoMet_MTase"/>
    <property type="match status" value="1"/>
</dbReference>
<name>TRM44_DEBHA</name>
<organism>
    <name type="scientific">Debaryomyces hansenii (strain ATCC 36239 / CBS 767 / BCRC 21394 / JCM 1990 / NBRC 0083 / IGC 2968)</name>
    <name type="common">Yeast</name>
    <name type="synonym">Torulaspora hansenii</name>
    <dbReference type="NCBI Taxonomy" id="284592"/>
    <lineage>
        <taxon>Eukaryota</taxon>
        <taxon>Fungi</taxon>
        <taxon>Dikarya</taxon>
        <taxon>Ascomycota</taxon>
        <taxon>Saccharomycotina</taxon>
        <taxon>Pichiomycetes</taxon>
        <taxon>Debaryomycetaceae</taxon>
        <taxon>Debaryomyces</taxon>
    </lineage>
</organism>
<protein>
    <recommendedName>
        <fullName>tRNA (uracil-O(2)-)-methyltransferase</fullName>
        <ecNumber>2.1.1.211</ecNumber>
    </recommendedName>
</protein>
<evidence type="ECO:0000250" key="1"/>
<evidence type="ECO:0000305" key="2"/>
<comment type="function">
    <text evidence="1">Probable adenosyl-L-methionine (AdoMet)-dependent tRNA (uracil-O(2)-)-methyltransferase.</text>
</comment>
<comment type="catalytic activity">
    <reaction>
        <text>uridine(44) in tRNA(Ser) + S-adenosyl-L-methionine = 2'-O-methyluridine(44) in tRNA(Ser) + S-adenosyl-L-homocysteine + H(+)</text>
        <dbReference type="Rhea" id="RHEA:43100"/>
        <dbReference type="Rhea" id="RHEA-COMP:10339"/>
        <dbReference type="Rhea" id="RHEA-COMP:10340"/>
        <dbReference type="ChEBI" id="CHEBI:15378"/>
        <dbReference type="ChEBI" id="CHEBI:57856"/>
        <dbReference type="ChEBI" id="CHEBI:59789"/>
        <dbReference type="ChEBI" id="CHEBI:65315"/>
        <dbReference type="ChEBI" id="CHEBI:74478"/>
        <dbReference type="EC" id="2.1.1.211"/>
    </reaction>
</comment>
<comment type="subcellular location">
    <subcellularLocation>
        <location evidence="1">Cytoplasm</location>
    </subcellularLocation>
</comment>
<comment type="similarity">
    <text evidence="2">Belongs to the TRM44 family.</text>
</comment>
<proteinExistence type="inferred from homology"/>
<sequence length="594" mass="67284">MVKHTKSKNDFDAELLLSETSKIGDPWVPIYQTAVDIEAHHFETAMSNLIKQPNINSTVIMRADILKENVFDVENGDSTFVSKLINKVPEFPSENPDDVILHRYLDDIDLRTISLNNSELKLNTKCEVVRRIIPRNPFKDHIINQTCLVLSSSNADPESHTEKESDDSVLVVYIPHIQSSDEIPFYLPPVYGVGILYHKSTLSIQYLPFNYQNYKTSPEIQLSLRNLDVTERPIRIALRLLQTSSKHSLGAKSGYEKRVNHDLVVPKIAFQNRYITLKKKYSSNLVNSWCESTDPKKHVFEDLAIAAFLIELWTVKYKSREDFEFRDLGCGNGLLVYILNMEGYSGKGIDARSRKSWSTYPENVQNNLSEQIIIPSVLLKPHPALSRLIPNVTDNFRYFQAPQLPSKNNCSCEAENVPADDKSTSHTNSSSTLTTYSSANLLESSQVCTTEEFPPNTFIIGNHSDELTCWIPLLGYPFMVIPCCSHALSGAKVRYSPRKQQKSNQQQNVSTYGALVDHTEDLAKQMGWIVEKEMLRIPSTRNAAIIATKRQPHCIDENDEVTQTRVLDILALEGGAEGWVENSINLMKKAPRNH</sequence>
<accession>Q6BRY1</accession>
<feature type="chain" id="PRO_0000249904" description="tRNA (uracil-O(2)-)-methyltransferase">
    <location>
        <begin position="1"/>
        <end position="594"/>
    </location>
</feature>